<protein>
    <recommendedName>
        <fullName evidence="1">Methylenetetrahydrofolate--tRNA-(uracil-5-)-methyltransferase TrmFO</fullName>
        <ecNumber evidence="1">2.1.1.74</ecNumber>
    </recommendedName>
    <alternativeName>
        <fullName evidence="1">Folate-dependent tRNA (uracil-5-)-methyltransferase</fullName>
    </alternativeName>
    <alternativeName>
        <fullName evidence="1">Folate-dependent tRNA(M-5-U54)-methyltransferase</fullName>
    </alternativeName>
</protein>
<sequence>MADHDIHIIGGGLAGSEAAWQLAEAGYHVRLSEMRGGGDMTPAHQGDGLAEMVCSNSFRSDDGDSNAVGLLHREMRALGSIIMREADATKVPAGSALAVDRDLFSGGVTRALSEHPNITIVRERIDKLPTEGLTIVATGPLTAASLAESIGAATGKDALAFFDAIAPIVYRDSIDMDIAWMASRWDRVGPIGDGRDYINCPLDKDQYYAFVQGLLDGEKTEFKDWEKDTPYFEGCMPIEVMAERGVETLRFGPMKGVGLDNPRTGRWPYAVVQLRQDNALGTLWNMVGFQTKLKHAEQVRLFRTIPGLEKAEFARLGGLHRNSFIRSPELLDRQLRLKSAPHIRFAGQITGCEGYVESAAIGLVAARFAAAELGGRALPPPPPETALGALLCHITGGADASSYQPMNVNFGLFPPLADDVRKKDRKLGYTQRAGKALAEWMTVAAGVAA</sequence>
<name>TRMFO_SPHAL</name>
<reference key="1">
    <citation type="journal article" date="2009" name="Proc. Natl. Acad. Sci. U.S.A.">
        <title>The genomic basis of trophic strategy in marine bacteria.</title>
        <authorList>
            <person name="Lauro F.M."/>
            <person name="McDougald D."/>
            <person name="Thomas T."/>
            <person name="Williams T.J."/>
            <person name="Egan S."/>
            <person name="Rice S."/>
            <person name="DeMaere M.Z."/>
            <person name="Ting L."/>
            <person name="Ertan H."/>
            <person name="Johnson J."/>
            <person name="Ferriera S."/>
            <person name="Lapidus A."/>
            <person name="Anderson I."/>
            <person name="Kyrpides N."/>
            <person name="Munk A.C."/>
            <person name="Detter C."/>
            <person name="Han C.S."/>
            <person name="Brown M.V."/>
            <person name="Robb F.T."/>
            <person name="Kjelleberg S."/>
            <person name="Cavicchioli R."/>
        </authorList>
    </citation>
    <scope>NUCLEOTIDE SEQUENCE [LARGE SCALE GENOMIC DNA]</scope>
    <source>
        <strain>DSM 13593 / LMG 18877 / RB2256</strain>
    </source>
</reference>
<keyword id="KW-0963">Cytoplasm</keyword>
<keyword id="KW-0274">FAD</keyword>
<keyword id="KW-0285">Flavoprotein</keyword>
<keyword id="KW-0489">Methyltransferase</keyword>
<keyword id="KW-0520">NAD</keyword>
<keyword id="KW-0521">NADP</keyword>
<keyword id="KW-1185">Reference proteome</keyword>
<keyword id="KW-0808">Transferase</keyword>
<keyword id="KW-0819">tRNA processing</keyword>
<evidence type="ECO:0000255" key="1">
    <source>
        <dbReference type="HAMAP-Rule" id="MF_01037"/>
    </source>
</evidence>
<dbReference type="EC" id="2.1.1.74" evidence="1"/>
<dbReference type="EMBL" id="CP000356">
    <property type="protein sequence ID" value="ABF52875.1"/>
    <property type="molecule type" value="Genomic_DNA"/>
</dbReference>
<dbReference type="RefSeq" id="WP_011541460.1">
    <property type="nucleotide sequence ID" value="NC_008048.1"/>
</dbReference>
<dbReference type="SMR" id="Q1GTZ7"/>
<dbReference type="STRING" id="317655.Sala_1159"/>
<dbReference type="KEGG" id="sal:Sala_1159"/>
<dbReference type="eggNOG" id="COG1206">
    <property type="taxonomic scope" value="Bacteria"/>
</dbReference>
<dbReference type="HOGENOM" id="CLU_033057_1_0_5"/>
<dbReference type="OrthoDB" id="9803114at2"/>
<dbReference type="Proteomes" id="UP000006578">
    <property type="component" value="Chromosome"/>
</dbReference>
<dbReference type="GO" id="GO:0005829">
    <property type="term" value="C:cytosol"/>
    <property type="evidence" value="ECO:0007669"/>
    <property type="project" value="TreeGrafter"/>
</dbReference>
<dbReference type="GO" id="GO:0050660">
    <property type="term" value="F:flavin adenine dinucleotide binding"/>
    <property type="evidence" value="ECO:0007669"/>
    <property type="project" value="UniProtKB-UniRule"/>
</dbReference>
<dbReference type="GO" id="GO:0047151">
    <property type="term" value="F:tRNA (uracil(54)-C5)-methyltransferase activity, 5,10-methylenetetrahydrofolate-dependent"/>
    <property type="evidence" value="ECO:0007669"/>
    <property type="project" value="UniProtKB-UniRule"/>
</dbReference>
<dbReference type="GO" id="GO:0030488">
    <property type="term" value="P:tRNA methylation"/>
    <property type="evidence" value="ECO:0007669"/>
    <property type="project" value="TreeGrafter"/>
</dbReference>
<dbReference type="GO" id="GO:0002098">
    <property type="term" value="P:tRNA wobble uridine modification"/>
    <property type="evidence" value="ECO:0007669"/>
    <property type="project" value="TreeGrafter"/>
</dbReference>
<dbReference type="Gene3D" id="3.50.50.60">
    <property type="entry name" value="FAD/NAD(P)-binding domain"/>
    <property type="match status" value="2"/>
</dbReference>
<dbReference type="HAMAP" id="MF_01037">
    <property type="entry name" value="TrmFO"/>
    <property type="match status" value="1"/>
</dbReference>
<dbReference type="InterPro" id="IPR036188">
    <property type="entry name" value="FAD/NAD-bd_sf"/>
</dbReference>
<dbReference type="InterPro" id="IPR002218">
    <property type="entry name" value="MnmG-rel"/>
</dbReference>
<dbReference type="InterPro" id="IPR020595">
    <property type="entry name" value="MnmG-rel_CS"/>
</dbReference>
<dbReference type="InterPro" id="IPR040131">
    <property type="entry name" value="MnmG_N"/>
</dbReference>
<dbReference type="InterPro" id="IPR004417">
    <property type="entry name" value="TrmFO"/>
</dbReference>
<dbReference type="NCBIfam" id="TIGR00137">
    <property type="entry name" value="gid_trmFO"/>
    <property type="match status" value="1"/>
</dbReference>
<dbReference type="NCBIfam" id="NF003739">
    <property type="entry name" value="PRK05335.1"/>
    <property type="match status" value="1"/>
</dbReference>
<dbReference type="PANTHER" id="PTHR11806">
    <property type="entry name" value="GLUCOSE INHIBITED DIVISION PROTEIN A"/>
    <property type="match status" value="1"/>
</dbReference>
<dbReference type="PANTHER" id="PTHR11806:SF2">
    <property type="entry name" value="METHYLENETETRAHYDROFOLATE--TRNA-(URACIL-5-)-METHYLTRANSFERASE TRMFO"/>
    <property type="match status" value="1"/>
</dbReference>
<dbReference type="Pfam" id="PF01134">
    <property type="entry name" value="GIDA"/>
    <property type="match status" value="1"/>
</dbReference>
<dbReference type="SUPFAM" id="SSF51905">
    <property type="entry name" value="FAD/NAD(P)-binding domain"/>
    <property type="match status" value="1"/>
</dbReference>
<dbReference type="PROSITE" id="PS01281">
    <property type="entry name" value="GIDA_2"/>
    <property type="match status" value="1"/>
</dbReference>
<feature type="chain" id="PRO_0000346396" description="Methylenetetrahydrofolate--tRNA-(uracil-5-)-methyltransferase TrmFO">
    <location>
        <begin position="1"/>
        <end position="449"/>
    </location>
</feature>
<feature type="binding site" evidence="1">
    <location>
        <begin position="10"/>
        <end position="15"/>
    </location>
    <ligand>
        <name>FAD</name>
        <dbReference type="ChEBI" id="CHEBI:57692"/>
    </ligand>
</feature>
<accession>Q1GTZ7</accession>
<organism>
    <name type="scientific">Sphingopyxis alaskensis (strain DSM 13593 / LMG 18877 / RB2256)</name>
    <name type="common">Sphingomonas alaskensis</name>
    <dbReference type="NCBI Taxonomy" id="317655"/>
    <lineage>
        <taxon>Bacteria</taxon>
        <taxon>Pseudomonadati</taxon>
        <taxon>Pseudomonadota</taxon>
        <taxon>Alphaproteobacteria</taxon>
        <taxon>Sphingomonadales</taxon>
        <taxon>Sphingomonadaceae</taxon>
        <taxon>Sphingopyxis</taxon>
    </lineage>
</organism>
<comment type="function">
    <text evidence="1">Catalyzes the folate-dependent formation of 5-methyl-uridine at position 54 (M-5-U54) in all tRNAs.</text>
</comment>
<comment type="catalytic activity">
    <reaction evidence="1">
        <text>uridine(54) in tRNA + (6R)-5,10-methylene-5,6,7,8-tetrahydrofolate + NADH + H(+) = 5-methyluridine(54) in tRNA + (6S)-5,6,7,8-tetrahydrofolate + NAD(+)</text>
        <dbReference type="Rhea" id="RHEA:16873"/>
        <dbReference type="Rhea" id="RHEA-COMP:10167"/>
        <dbReference type="Rhea" id="RHEA-COMP:10193"/>
        <dbReference type="ChEBI" id="CHEBI:15378"/>
        <dbReference type="ChEBI" id="CHEBI:15636"/>
        <dbReference type="ChEBI" id="CHEBI:57453"/>
        <dbReference type="ChEBI" id="CHEBI:57540"/>
        <dbReference type="ChEBI" id="CHEBI:57945"/>
        <dbReference type="ChEBI" id="CHEBI:65315"/>
        <dbReference type="ChEBI" id="CHEBI:74447"/>
        <dbReference type="EC" id="2.1.1.74"/>
    </reaction>
</comment>
<comment type="catalytic activity">
    <reaction evidence="1">
        <text>uridine(54) in tRNA + (6R)-5,10-methylene-5,6,7,8-tetrahydrofolate + NADPH + H(+) = 5-methyluridine(54) in tRNA + (6S)-5,6,7,8-tetrahydrofolate + NADP(+)</text>
        <dbReference type="Rhea" id="RHEA:62372"/>
        <dbReference type="Rhea" id="RHEA-COMP:10167"/>
        <dbReference type="Rhea" id="RHEA-COMP:10193"/>
        <dbReference type="ChEBI" id="CHEBI:15378"/>
        <dbReference type="ChEBI" id="CHEBI:15636"/>
        <dbReference type="ChEBI" id="CHEBI:57453"/>
        <dbReference type="ChEBI" id="CHEBI:57783"/>
        <dbReference type="ChEBI" id="CHEBI:58349"/>
        <dbReference type="ChEBI" id="CHEBI:65315"/>
        <dbReference type="ChEBI" id="CHEBI:74447"/>
        <dbReference type="EC" id="2.1.1.74"/>
    </reaction>
</comment>
<comment type="cofactor">
    <cofactor evidence="1">
        <name>FAD</name>
        <dbReference type="ChEBI" id="CHEBI:57692"/>
    </cofactor>
</comment>
<comment type="subcellular location">
    <subcellularLocation>
        <location evidence="1">Cytoplasm</location>
    </subcellularLocation>
</comment>
<comment type="similarity">
    <text evidence="1">Belongs to the MnmG family. TrmFO subfamily.</text>
</comment>
<proteinExistence type="inferred from homology"/>
<gene>
    <name evidence="1" type="primary">trmFO</name>
    <name type="ordered locus">Sala_1159</name>
</gene>